<keyword id="KW-0235">DNA replication</keyword>
<keyword id="KW-0428">Leader peptide</keyword>
<keyword id="KW-0614">Plasmid</keyword>
<reference key="1">
    <citation type="submission" date="2000-04" db="EMBL/GenBank/DDBJ databases">
        <title>Complete nucleotide sequence of the F plasmid: its implications for organization and diversification of plasmid genomes.</title>
        <authorList>
            <person name="Shimizu H."/>
            <person name="Saitoh Y."/>
            <person name="Suda Y."/>
            <person name="Uehara K."/>
            <person name="Sampei G."/>
            <person name="Mizobuchi K."/>
        </authorList>
    </citation>
    <scope>NUCLEOTIDE SEQUENCE [LARGE SCALE GENOMIC DNA]</scope>
    <source>
        <strain>K12 / CR63</strain>
    </source>
</reference>
<protein>
    <recommendedName>
        <fullName>Positive regulator of RepFIC repA1 expression</fullName>
    </recommendedName>
    <alternativeName>
        <fullName>repA1 leader peptide</fullName>
    </alternativeName>
</protein>
<accession>P56980</accession>
<feature type="peptide" id="PRO_0000068342" description="Positive regulator of RepFIC repA1 expression">
    <location>
        <begin position="1"/>
        <end position="24"/>
    </location>
</feature>
<geneLocation type="plasmid">
    <name>F</name>
</geneLocation>
<name>REPL1_ECOLI</name>
<dbReference type="EMBL" id="AP001918">
    <property type="protein sequence ID" value="BAA97877.1"/>
    <property type="molecule type" value="Genomic_DNA"/>
</dbReference>
<dbReference type="RefSeq" id="NP_061386.1">
    <property type="nucleotide sequence ID" value="NC_002483.1"/>
</dbReference>
<dbReference type="KEGG" id="ecoc:C3026_24130"/>
<dbReference type="GO" id="GO:0006260">
    <property type="term" value="P:DNA replication"/>
    <property type="evidence" value="ECO:0007669"/>
    <property type="project" value="UniProtKB-KW"/>
</dbReference>
<dbReference type="InterPro" id="IPR012605">
    <property type="entry name" value="RepA1_leader_peptide_Tap"/>
</dbReference>
<dbReference type="NCBIfam" id="TIGR03475">
    <property type="entry name" value="tap_IncFII_lead"/>
    <property type="match status" value="1"/>
</dbReference>
<dbReference type="Pfam" id="PF08048">
    <property type="entry name" value="RepA1_leader"/>
    <property type="match status" value="1"/>
</dbReference>
<gene>
    <name type="primary">repL</name>
    <name type="ordered locus">ECOK12F007</name>
</gene>
<sequence length="24" mass="2588">MPGKVQDFFLCSLLLCIVSAGWCG</sequence>
<proteinExistence type="predicted"/>
<organism>
    <name type="scientific">Escherichia coli (strain K12)</name>
    <dbReference type="NCBI Taxonomy" id="83333"/>
    <lineage>
        <taxon>Bacteria</taxon>
        <taxon>Pseudomonadati</taxon>
        <taxon>Pseudomonadota</taxon>
        <taxon>Gammaproteobacteria</taxon>
        <taxon>Enterobacterales</taxon>
        <taxon>Enterobacteriaceae</taxon>
        <taxon>Escherichia</taxon>
    </lineage>
</organism>